<proteinExistence type="evidence at transcript level"/>
<gene>
    <name type="ORF">zgc:77739</name>
</gene>
<evidence type="ECO:0000305" key="1"/>
<keyword id="KW-1185">Reference proteome</keyword>
<comment type="similarity">
    <text evidence="1">Belongs to the UPF0462 family.</text>
</comment>
<organism>
    <name type="scientific">Danio rerio</name>
    <name type="common">Zebrafish</name>
    <name type="synonym">Brachydanio rerio</name>
    <dbReference type="NCBI Taxonomy" id="7955"/>
    <lineage>
        <taxon>Eukaryota</taxon>
        <taxon>Metazoa</taxon>
        <taxon>Chordata</taxon>
        <taxon>Craniata</taxon>
        <taxon>Vertebrata</taxon>
        <taxon>Euteleostomi</taxon>
        <taxon>Actinopterygii</taxon>
        <taxon>Neopterygii</taxon>
        <taxon>Teleostei</taxon>
        <taxon>Ostariophysi</taxon>
        <taxon>Cypriniformes</taxon>
        <taxon>Danionidae</taxon>
        <taxon>Danioninae</taxon>
        <taxon>Danio</taxon>
    </lineage>
</organism>
<dbReference type="EMBL" id="BC064302">
    <property type="protein sequence ID" value="AAH64302.1"/>
    <property type="molecule type" value="mRNA"/>
</dbReference>
<dbReference type="RefSeq" id="NP_957190.1">
    <property type="nucleotide sequence ID" value="NM_200896.1"/>
</dbReference>
<dbReference type="SMR" id="Q6P2T7"/>
<dbReference type="FunCoup" id="Q6P2T7">
    <property type="interactions" value="477"/>
</dbReference>
<dbReference type="STRING" id="7955.ENSDARP00000007907"/>
<dbReference type="PaxDb" id="7955-ENSDARP00000007907"/>
<dbReference type="GeneID" id="393870"/>
<dbReference type="KEGG" id="dre:393870"/>
<dbReference type="AGR" id="ZFIN:ZDB-GENE-040426-1862"/>
<dbReference type="ZFIN" id="ZDB-GENE-040426-1862">
    <property type="gene designation" value="zgc:77739"/>
</dbReference>
<dbReference type="eggNOG" id="ENOG502R3ZD">
    <property type="taxonomic scope" value="Eukaryota"/>
</dbReference>
<dbReference type="InParanoid" id="Q6P2T7"/>
<dbReference type="OrthoDB" id="10056816at2759"/>
<dbReference type="PhylomeDB" id="Q6P2T7"/>
<dbReference type="PRO" id="PR:Q6P2T7"/>
<dbReference type="Proteomes" id="UP000000437">
    <property type="component" value="Alternate scaffold 1"/>
</dbReference>
<dbReference type="Proteomes" id="UP000000437">
    <property type="component" value="Chromosome 1"/>
</dbReference>
<dbReference type="Gene3D" id="2.60.40.1190">
    <property type="match status" value="1"/>
</dbReference>
<dbReference type="PANTHER" id="PTHR31475">
    <property type="entry name" value="UPF0462 PROTEIN"/>
    <property type="match status" value="1"/>
</dbReference>
<dbReference type="PANTHER" id="PTHR31475:SF5">
    <property type="entry name" value="UPF0462 PROTEIN C4ORF33 HOMOLOG"/>
    <property type="match status" value="1"/>
</dbReference>
<feature type="chain" id="PRO_0000295717" description="UPF0462 protein C4orf33 homolog">
    <location>
        <begin position="1"/>
        <end position="197"/>
    </location>
</feature>
<reference key="1">
    <citation type="submission" date="2003-12" db="EMBL/GenBank/DDBJ databases">
        <authorList>
            <consortium name="NIH - Zebrafish Gene Collection (ZGC) project"/>
        </authorList>
    </citation>
    <scope>NUCLEOTIDE SEQUENCE [LARGE SCALE MRNA]</scope>
</reference>
<name>CD033_DANRE</name>
<protein>
    <recommendedName>
        <fullName>UPF0462 protein C4orf33 homolog</fullName>
    </recommendedName>
</protein>
<sequence length="197" mass="22749">MDFYIRHTWDSLPVDHKPVKIRFSPGEDGLLMQVTAPFFNDPPAPAGPPGEPFPGLWDYEVVESFFLNSETEQYLEVEVCPYGQHLILLLNGKHNAFMQQLPLSFRANIEDSTWHGEALLPWRYFPQGINKMNSYAIHGSGAGRTYESLYPVPREDLQEGQGPDFHRLEYFQDFTLQSIMGEDWVQPESDLWDLARK</sequence>
<accession>Q6P2T7</accession>